<comment type="function">
    <text evidence="1">Catalyzes the hydrolysis of the adenine ring of phosphoribosyl-AMP.</text>
</comment>
<comment type="catalytic activity">
    <reaction evidence="1">
        <text>1-(5-phospho-beta-D-ribosyl)-5'-AMP + H2O = 1-(5-phospho-beta-D-ribosyl)-5-[(5-phospho-beta-D-ribosylamino)methylideneamino]imidazole-4-carboxamide</text>
        <dbReference type="Rhea" id="RHEA:20049"/>
        <dbReference type="ChEBI" id="CHEBI:15377"/>
        <dbReference type="ChEBI" id="CHEBI:58435"/>
        <dbReference type="ChEBI" id="CHEBI:59457"/>
        <dbReference type="EC" id="3.5.4.19"/>
    </reaction>
</comment>
<comment type="cofactor">
    <cofactor evidence="1">
        <name>Mg(2+)</name>
        <dbReference type="ChEBI" id="CHEBI:18420"/>
    </cofactor>
    <text evidence="1">Binds 1 Mg(2+) ion per subunit.</text>
</comment>
<comment type="cofactor">
    <cofactor evidence="1">
        <name>Zn(2+)</name>
        <dbReference type="ChEBI" id="CHEBI:29105"/>
    </cofactor>
    <text evidence="1">Binds 1 zinc ion per subunit.</text>
</comment>
<comment type="pathway">
    <text evidence="1">Amino-acid biosynthesis; L-histidine biosynthesis; L-histidine from 5-phospho-alpha-D-ribose 1-diphosphate: step 3/9.</text>
</comment>
<comment type="subunit">
    <text evidence="1">Homodimer.</text>
</comment>
<comment type="subcellular location">
    <subcellularLocation>
        <location evidence="1">Cytoplasm</location>
    </subcellularLocation>
</comment>
<comment type="similarity">
    <text evidence="1">Belongs to the PRA-CH family.</text>
</comment>
<protein>
    <recommendedName>
        <fullName evidence="1">Phosphoribosyl-AMP cyclohydrolase</fullName>
        <shortName evidence="1">PRA-CH</shortName>
        <ecNumber evidence="1">3.5.4.19</ecNumber>
    </recommendedName>
</protein>
<dbReference type="EC" id="3.5.4.19" evidence="1"/>
<dbReference type="EMBL" id="CP000611">
    <property type="protein sequence ID" value="ABQ73362.1"/>
    <property type="molecule type" value="Genomic_DNA"/>
</dbReference>
<dbReference type="RefSeq" id="WP_003407963.1">
    <property type="nucleotide sequence ID" value="NZ_CP016972.1"/>
</dbReference>
<dbReference type="SMR" id="A5U2W2"/>
<dbReference type="GeneID" id="45425574"/>
<dbReference type="KEGG" id="mra:MRA_1616"/>
<dbReference type="eggNOG" id="COG0139">
    <property type="taxonomic scope" value="Bacteria"/>
</dbReference>
<dbReference type="HOGENOM" id="CLU_048577_5_1_11"/>
<dbReference type="UniPathway" id="UPA00031">
    <property type="reaction ID" value="UER00008"/>
</dbReference>
<dbReference type="Proteomes" id="UP000001988">
    <property type="component" value="Chromosome"/>
</dbReference>
<dbReference type="GO" id="GO:0005737">
    <property type="term" value="C:cytoplasm"/>
    <property type="evidence" value="ECO:0007669"/>
    <property type="project" value="UniProtKB-SubCell"/>
</dbReference>
<dbReference type="GO" id="GO:0000287">
    <property type="term" value="F:magnesium ion binding"/>
    <property type="evidence" value="ECO:0007669"/>
    <property type="project" value="UniProtKB-UniRule"/>
</dbReference>
<dbReference type="GO" id="GO:0004635">
    <property type="term" value="F:phosphoribosyl-AMP cyclohydrolase activity"/>
    <property type="evidence" value="ECO:0007669"/>
    <property type="project" value="UniProtKB-UniRule"/>
</dbReference>
<dbReference type="GO" id="GO:0008270">
    <property type="term" value="F:zinc ion binding"/>
    <property type="evidence" value="ECO:0007669"/>
    <property type="project" value="UniProtKB-UniRule"/>
</dbReference>
<dbReference type="GO" id="GO:0000105">
    <property type="term" value="P:L-histidine biosynthetic process"/>
    <property type="evidence" value="ECO:0007669"/>
    <property type="project" value="UniProtKB-UniRule"/>
</dbReference>
<dbReference type="FunFam" id="3.10.20.810:FF:000001">
    <property type="entry name" value="Histidine biosynthesis bifunctional protein HisIE"/>
    <property type="match status" value="1"/>
</dbReference>
<dbReference type="Gene3D" id="3.10.20.810">
    <property type="entry name" value="Phosphoribosyl-AMP cyclohydrolase"/>
    <property type="match status" value="1"/>
</dbReference>
<dbReference type="HAMAP" id="MF_01021">
    <property type="entry name" value="HisI"/>
    <property type="match status" value="1"/>
</dbReference>
<dbReference type="InterPro" id="IPR026660">
    <property type="entry name" value="PRA-CH"/>
</dbReference>
<dbReference type="InterPro" id="IPR002496">
    <property type="entry name" value="PRib_AMP_CycHydrolase_dom"/>
</dbReference>
<dbReference type="InterPro" id="IPR038019">
    <property type="entry name" value="PRib_AMP_CycHydrolase_sf"/>
</dbReference>
<dbReference type="NCBIfam" id="NF000768">
    <property type="entry name" value="PRK00051.1"/>
    <property type="match status" value="1"/>
</dbReference>
<dbReference type="PANTHER" id="PTHR42945">
    <property type="entry name" value="HISTIDINE BIOSYNTHESIS BIFUNCTIONAL PROTEIN"/>
    <property type="match status" value="1"/>
</dbReference>
<dbReference type="PANTHER" id="PTHR42945:SF11">
    <property type="entry name" value="PHOSPHORIBOSYL-AMP CYCLOHYDROLASE"/>
    <property type="match status" value="1"/>
</dbReference>
<dbReference type="Pfam" id="PF01502">
    <property type="entry name" value="PRA-CH"/>
    <property type="match status" value="1"/>
</dbReference>
<dbReference type="SUPFAM" id="SSF141734">
    <property type="entry name" value="HisI-like"/>
    <property type="match status" value="1"/>
</dbReference>
<feature type="chain" id="PRO_1000063418" description="Phosphoribosyl-AMP cyclohydrolase">
    <location>
        <begin position="1"/>
        <end position="115"/>
    </location>
</feature>
<feature type="binding site" evidence="1">
    <location>
        <position position="80"/>
    </location>
    <ligand>
        <name>Mg(2+)</name>
        <dbReference type="ChEBI" id="CHEBI:18420"/>
    </ligand>
</feature>
<feature type="binding site" evidence="1">
    <location>
        <position position="81"/>
    </location>
    <ligand>
        <name>Zn(2+)</name>
        <dbReference type="ChEBI" id="CHEBI:29105"/>
        <note>ligand shared between dimeric partners</note>
    </ligand>
</feature>
<feature type="binding site" evidence="1">
    <location>
        <position position="82"/>
    </location>
    <ligand>
        <name>Mg(2+)</name>
        <dbReference type="ChEBI" id="CHEBI:18420"/>
    </ligand>
</feature>
<feature type="binding site" evidence="1">
    <location>
        <position position="84"/>
    </location>
    <ligand>
        <name>Mg(2+)</name>
        <dbReference type="ChEBI" id="CHEBI:18420"/>
    </ligand>
</feature>
<feature type="binding site" evidence="1">
    <location>
        <position position="97"/>
    </location>
    <ligand>
        <name>Zn(2+)</name>
        <dbReference type="ChEBI" id="CHEBI:29105"/>
        <note>ligand shared between dimeric partners</note>
    </ligand>
</feature>
<feature type="binding site" evidence="1">
    <location>
        <position position="104"/>
    </location>
    <ligand>
        <name>Zn(2+)</name>
        <dbReference type="ChEBI" id="CHEBI:29105"/>
        <note>ligand shared between dimeric partners</note>
    </ligand>
</feature>
<gene>
    <name evidence="1" type="primary">hisI</name>
    <name type="ordered locus">MRA_1616</name>
</gene>
<organism>
    <name type="scientific">Mycobacterium tuberculosis (strain ATCC 25177 / H37Ra)</name>
    <dbReference type="NCBI Taxonomy" id="419947"/>
    <lineage>
        <taxon>Bacteria</taxon>
        <taxon>Bacillati</taxon>
        <taxon>Actinomycetota</taxon>
        <taxon>Actinomycetes</taxon>
        <taxon>Mycobacteriales</taxon>
        <taxon>Mycobacteriaceae</taxon>
        <taxon>Mycobacterium</taxon>
        <taxon>Mycobacterium tuberculosis complex</taxon>
    </lineage>
</organism>
<reference key="1">
    <citation type="journal article" date="2008" name="PLoS ONE">
        <title>Genetic basis of virulence attenuation revealed by comparative genomic analysis of Mycobacterium tuberculosis strain H37Ra versus H37Rv.</title>
        <authorList>
            <person name="Zheng H."/>
            <person name="Lu L."/>
            <person name="Wang B."/>
            <person name="Pu S."/>
            <person name="Zhang X."/>
            <person name="Zhu G."/>
            <person name="Shi W."/>
            <person name="Zhang L."/>
            <person name="Wang H."/>
            <person name="Wang S."/>
            <person name="Zhao G."/>
            <person name="Zhang Y."/>
        </authorList>
    </citation>
    <scope>NUCLEOTIDE SEQUENCE [LARGE SCALE GENOMIC DNA]</scope>
    <source>
        <strain>ATCC 25177 / H37Ra</strain>
    </source>
</reference>
<accession>A5U2W2</accession>
<name>HIS3_MYCTA</name>
<sequence>MTLDPKIAARLKRNADGLVTAVVQERGSGDVLMVAWMNDEALARTLQTREATYYSRSRAEQWVKGATSGHTQHVHSVRLDCDGDAVLLTVDQVGGACHTGDHSCFDAAVLLEPDD</sequence>
<evidence type="ECO:0000255" key="1">
    <source>
        <dbReference type="HAMAP-Rule" id="MF_01021"/>
    </source>
</evidence>
<keyword id="KW-0028">Amino-acid biosynthesis</keyword>
<keyword id="KW-0963">Cytoplasm</keyword>
<keyword id="KW-0368">Histidine biosynthesis</keyword>
<keyword id="KW-0378">Hydrolase</keyword>
<keyword id="KW-0460">Magnesium</keyword>
<keyword id="KW-0479">Metal-binding</keyword>
<keyword id="KW-1185">Reference proteome</keyword>
<keyword id="KW-0862">Zinc</keyword>
<proteinExistence type="inferred from homology"/>